<comment type="function">
    <text evidence="1">Probably recognizes and binds to some phosphorylated proteins and promotes their ubiquitination and degradation.</text>
</comment>
<comment type="subunit">
    <text evidence="1">Part of a SCF (SKP1-cullin-F-box) protein ligase complex.</text>
</comment>
<comment type="subcellular location">
    <subcellularLocation>
        <location evidence="2">Chromosome</location>
        <location evidence="2">Centromere</location>
        <location evidence="2">Kinetochore</location>
    </subcellularLocation>
</comment>
<comment type="sequence caution" evidence="5">
    <conflict type="erroneous initiation">
        <sequence resource="EMBL-CDS" id="AAH55458"/>
    </conflict>
    <text>Extended N-terminus.</text>
</comment>
<reference key="1">
    <citation type="journal article" date="2003" name="DNA Res.">
        <title>Prediction of the coding sequences of mouse homologues of KIAA gene: II. The complete nucleotide sequences of 400 mouse KIAA-homologous cDNAs identified by screening of terminal sequences of cDNA clones randomly sampled from size-fractionated libraries.</title>
        <authorList>
            <person name="Okazaki N."/>
            <person name="Kikuno R."/>
            <person name="Ohara R."/>
            <person name="Inamoto S."/>
            <person name="Aizawa H."/>
            <person name="Yuasa S."/>
            <person name="Nakajima D."/>
            <person name="Nagase T."/>
            <person name="Ohara O."/>
            <person name="Koga H."/>
        </authorList>
    </citation>
    <scope>NUCLEOTIDE SEQUENCE [LARGE SCALE MRNA]</scope>
    <source>
        <tissue>Brain</tissue>
    </source>
</reference>
<reference key="2">
    <citation type="journal article" date="2005" name="Science">
        <title>The transcriptional landscape of the mammalian genome.</title>
        <authorList>
            <person name="Carninci P."/>
            <person name="Kasukawa T."/>
            <person name="Katayama S."/>
            <person name="Gough J."/>
            <person name="Frith M.C."/>
            <person name="Maeda N."/>
            <person name="Oyama R."/>
            <person name="Ravasi T."/>
            <person name="Lenhard B."/>
            <person name="Wells C."/>
            <person name="Kodzius R."/>
            <person name="Shimokawa K."/>
            <person name="Bajic V.B."/>
            <person name="Brenner S.E."/>
            <person name="Batalov S."/>
            <person name="Forrest A.R."/>
            <person name="Zavolan M."/>
            <person name="Davis M.J."/>
            <person name="Wilming L.G."/>
            <person name="Aidinis V."/>
            <person name="Allen J.E."/>
            <person name="Ambesi-Impiombato A."/>
            <person name="Apweiler R."/>
            <person name="Aturaliya R.N."/>
            <person name="Bailey T.L."/>
            <person name="Bansal M."/>
            <person name="Baxter L."/>
            <person name="Beisel K.W."/>
            <person name="Bersano T."/>
            <person name="Bono H."/>
            <person name="Chalk A.M."/>
            <person name="Chiu K.P."/>
            <person name="Choudhary V."/>
            <person name="Christoffels A."/>
            <person name="Clutterbuck D.R."/>
            <person name="Crowe M.L."/>
            <person name="Dalla E."/>
            <person name="Dalrymple B.P."/>
            <person name="de Bono B."/>
            <person name="Della Gatta G."/>
            <person name="di Bernardo D."/>
            <person name="Down T."/>
            <person name="Engstrom P."/>
            <person name="Fagiolini M."/>
            <person name="Faulkner G."/>
            <person name="Fletcher C.F."/>
            <person name="Fukushima T."/>
            <person name="Furuno M."/>
            <person name="Futaki S."/>
            <person name="Gariboldi M."/>
            <person name="Georgii-Hemming P."/>
            <person name="Gingeras T.R."/>
            <person name="Gojobori T."/>
            <person name="Green R.E."/>
            <person name="Gustincich S."/>
            <person name="Harbers M."/>
            <person name="Hayashi Y."/>
            <person name="Hensch T.K."/>
            <person name="Hirokawa N."/>
            <person name="Hill D."/>
            <person name="Huminiecki L."/>
            <person name="Iacono M."/>
            <person name="Ikeo K."/>
            <person name="Iwama A."/>
            <person name="Ishikawa T."/>
            <person name="Jakt M."/>
            <person name="Kanapin A."/>
            <person name="Katoh M."/>
            <person name="Kawasawa Y."/>
            <person name="Kelso J."/>
            <person name="Kitamura H."/>
            <person name="Kitano H."/>
            <person name="Kollias G."/>
            <person name="Krishnan S.P."/>
            <person name="Kruger A."/>
            <person name="Kummerfeld S.K."/>
            <person name="Kurochkin I.V."/>
            <person name="Lareau L.F."/>
            <person name="Lazarevic D."/>
            <person name="Lipovich L."/>
            <person name="Liu J."/>
            <person name="Liuni S."/>
            <person name="McWilliam S."/>
            <person name="Madan Babu M."/>
            <person name="Madera M."/>
            <person name="Marchionni L."/>
            <person name="Matsuda H."/>
            <person name="Matsuzawa S."/>
            <person name="Miki H."/>
            <person name="Mignone F."/>
            <person name="Miyake S."/>
            <person name="Morris K."/>
            <person name="Mottagui-Tabar S."/>
            <person name="Mulder N."/>
            <person name="Nakano N."/>
            <person name="Nakauchi H."/>
            <person name="Ng P."/>
            <person name="Nilsson R."/>
            <person name="Nishiguchi S."/>
            <person name="Nishikawa S."/>
            <person name="Nori F."/>
            <person name="Ohara O."/>
            <person name="Okazaki Y."/>
            <person name="Orlando V."/>
            <person name="Pang K.C."/>
            <person name="Pavan W.J."/>
            <person name="Pavesi G."/>
            <person name="Pesole G."/>
            <person name="Petrovsky N."/>
            <person name="Piazza S."/>
            <person name="Reed J."/>
            <person name="Reid J.F."/>
            <person name="Ring B.Z."/>
            <person name="Ringwald M."/>
            <person name="Rost B."/>
            <person name="Ruan Y."/>
            <person name="Salzberg S.L."/>
            <person name="Sandelin A."/>
            <person name="Schneider C."/>
            <person name="Schoenbach C."/>
            <person name="Sekiguchi K."/>
            <person name="Semple C.A."/>
            <person name="Seno S."/>
            <person name="Sessa L."/>
            <person name="Sheng Y."/>
            <person name="Shibata Y."/>
            <person name="Shimada H."/>
            <person name="Shimada K."/>
            <person name="Silva D."/>
            <person name="Sinclair B."/>
            <person name="Sperling S."/>
            <person name="Stupka E."/>
            <person name="Sugiura K."/>
            <person name="Sultana R."/>
            <person name="Takenaka Y."/>
            <person name="Taki K."/>
            <person name="Tammoja K."/>
            <person name="Tan S.L."/>
            <person name="Tang S."/>
            <person name="Taylor M.S."/>
            <person name="Tegner J."/>
            <person name="Teichmann S.A."/>
            <person name="Ueda H.R."/>
            <person name="van Nimwegen E."/>
            <person name="Verardo R."/>
            <person name="Wei C.L."/>
            <person name="Yagi K."/>
            <person name="Yamanishi H."/>
            <person name="Zabarovsky E."/>
            <person name="Zhu S."/>
            <person name="Zimmer A."/>
            <person name="Hide W."/>
            <person name="Bult C."/>
            <person name="Grimmond S.M."/>
            <person name="Teasdale R.D."/>
            <person name="Liu E.T."/>
            <person name="Brusic V."/>
            <person name="Quackenbush J."/>
            <person name="Wahlestedt C."/>
            <person name="Mattick J.S."/>
            <person name="Hume D.A."/>
            <person name="Kai C."/>
            <person name="Sasaki D."/>
            <person name="Tomaru Y."/>
            <person name="Fukuda S."/>
            <person name="Kanamori-Katayama M."/>
            <person name="Suzuki M."/>
            <person name="Aoki J."/>
            <person name="Arakawa T."/>
            <person name="Iida J."/>
            <person name="Imamura K."/>
            <person name="Itoh M."/>
            <person name="Kato T."/>
            <person name="Kawaji H."/>
            <person name="Kawagashira N."/>
            <person name="Kawashima T."/>
            <person name="Kojima M."/>
            <person name="Kondo S."/>
            <person name="Konno H."/>
            <person name="Nakano K."/>
            <person name="Ninomiya N."/>
            <person name="Nishio T."/>
            <person name="Okada M."/>
            <person name="Plessy C."/>
            <person name="Shibata K."/>
            <person name="Shiraki T."/>
            <person name="Suzuki S."/>
            <person name="Tagami M."/>
            <person name="Waki K."/>
            <person name="Watahiki A."/>
            <person name="Okamura-Oho Y."/>
            <person name="Suzuki H."/>
            <person name="Kawai J."/>
            <person name="Hayashizaki Y."/>
        </authorList>
    </citation>
    <scope>NUCLEOTIDE SEQUENCE [LARGE SCALE MRNA]</scope>
    <source>
        <strain>C57BL/6J</strain>
    </source>
</reference>
<reference key="3">
    <citation type="journal article" date="2004" name="Genome Res.">
        <title>The status, quality, and expansion of the NIH full-length cDNA project: the Mammalian Gene Collection (MGC).</title>
        <authorList>
            <consortium name="The MGC Project Team"/>
        </authorList>
    </citation>
    <scope>NUCLEOTIDE SEQUENCE [LARGE SCALE MRNA]</scope>
    <source>
        <strain>C57BL/6J</strain>
        <strain>FVB/N</strain>
        <tissue>Brain</tissue>
        <tissue>Mammary tumor</tissue>
    </source>
</reference>
<reference key="4">
    <citation type="journal article" date="2010" name="Cell">
        <title>A tissue-specific atlas of mouse protein phosphorylation and expression.</title>
        <authorList>
            <person name="Huttlin E.L."/>
            <person name="Jedrychowski M.P."/>
            <person name="Elias J.E."/>
            <person name="Goswami T."/>
            <person name="Rad R."/>
            <person name="Beausoleil S.A."/>
            <person name="Villen J."/>
            <person name="Haas W."/>
            <person name="Sowa M.E."/>
            <person name="Gygi S.P."/>
        </authorList>
    </citation>
    <scope>PHOSPHORYLATION [LARGE SCALE ANALYSIS] AT SER-344</scope>
    <scope>IDENTIFICATION BY MASS SPECTROMETRY [LARGE SCALE ANALYSIS]</scope>
    <source>
        <tissue>Lung</tissue>
    </source>
</reference>
<keyword id="KW-0137">Centromere</keyword>
<keyword id="KW-0158">Chromosome</keyword>
<keyword id="KW-0995">Kinetochore</keyword>
<keyword id="KW-0597">Phosphoprotein</keyword>
<keyword id="KW-1185">Reference proteome</keyword>
<keyword id="KW-0833">Ubl conjugation pathway</keyword>
<dbReference type="EMBL" id="AK122295">
    <property type="protein sequence ID" value="BAC65577.1"/>
    <property type="molecule type" value="mRNA"/>
</dbReference>
<dbReference type="EMBL" id="AK076211">
    <property type="protein sequence ID" value="BAC36256.1"/>
    <property type="molecule type" value="mRNA"/>
</dbReference>
<dbReference type="EMBL" id="AK077653">
    <property type="protein sequence ID" value="BAC36929.1"/>
    <property type="molecule type" value="mRNA"/>
</dbReference>
<dbReference type="EMBL" id="AK162188">
    <property type="protein sequence ID" value="BAE36778.1"/>
    <property type="molecule type" value="mRNA"/>
</dbReference>
<dbReference type="EMBL" id="BC055458">
    <property type="protein sequence ID" value="AAH55458.1"/>
    <property type="status" value="ALT_INIT"/>
    <property type="molecule type" value="mRNA"/>
</dbReference>
<dbReference type="EMBL" id="BC094542">
    <property type="protein sequence ID" value="AAH94542.1"/>
    <property type="molecule type" value="mRNA"/>
</dbReference>
<dbReference type="CCDS" id="CCDS15588.1"/>
<dbReference type="RefSeq" id="NP_780336.1">
    <property type="nucleotide sequence ID" value="NM_175127.2"/>
</dbReference>
<dbReference type="SMR" id="Q8BIG4"/>
<dbReference type="BioGRID" id="212559">
    <property type="interactions" value="2"/>
</dbReference>
<dbReference type="FunCoup" id="Q8BIG4">
    <property type="interactions" value="2020"/>
</dbReference>
<dbReference type="STRING" id="10090.ENSMUSP00000054718"/>
<dbReference type="iPTMnet" id="Q8BIG4"/>
<dbReference type="PhosphoSitePlus" id="Q8BIG4"/>
<dbReference type="jPOST" id="Q8BIG4"/>
<dbReference type="PaxDb" id="10090-ENSMUSP00000054718"/>
<dbReference type="PeptideAtlas" id="Q8BIG4"/>
<dbReference type="ProteomicsDB" id="267580"/>
<dbReference type="Pumba" id="Q8BIG4"/>
<dbReference type="Antibodypedia" id="34636">
    <property type="antibodies" value="185 antibodies from 27 providers"/>
</dbReference>
<dbReference type="DNASU" id="67948"/>
<dbReference type="Ensembl" id="ENSMUST00000051431.10">
    <property type="protein sequence ID" value="ENSMUSP00000054718.5"/>
    <property type="gene ID" value="ENSMUSG00000047539.10"/>
</dbReference>
<dbReference type="GeneID" id="67948"/>
<dbReference type="KEGG" id="mmu:67948"/>
<dbReference type="UCSC" id="uc007dyb.1">
    <property type="organism name" value="mouse"/>
</dbReference>
<dbReference type="AGR" id="MGI:1261890"/>
<dbReference type="CTD" id="23219"/>
<dbReference type="MGI" id="MGI:1261890">
    <property type="gene designation" value="Fbxo28"/>
</dbReference>
<dbReference type="VEuPathDB" id="HostDB:ENSMUSG00000047539"/>
<dbReference type="eggNOG" id="ENOG502QT70">
    <property type="taxonomic scope" value="Eukaryota"/>
</dbReference>
<dbReference type="GeneTree" id="ENSGT00390000002970"/>
<dbReference type="HOGENOM" id="CLU_024146_1_1_1"/>
<dbReference type="InParanoid" id="Q8BIG4"/>
<dbReference type="OMA" id="SSHFPRC"/>
<dbReference type="OrthoDB" id="5860767at2759"/>
<dbReference type="PhylomeDB" id="Q8BIG4"/>
<dbReference type="TreeFam" id="TF324672"/>
<dbReference type="BioGRID-ORCS" id="67948">
    <property type="hits" value="8 hits in 79 CRISPR screens"/>
</dbReference>
<dbReference type="ChiTaRS" id="Fbxo28">
    <property type="organism name" value="mouse"/>
</dbReference>
<dbReference type="PRO" id="PR:Q8BIG4"/>
<dbReference type="Proteomes" id="UP000000589">
    <property type="component" value="Chromosome 1"/>
</dbReference>
<dbReference type="RNAct" id="Q8BIG4">
    <property type="molecule type" value="protein"/>
</dbReference>
<dbReference type="Bgee" id="ENSMUSG00000047539">
    <property type="expression patterns" value="Expressed in animal zygote and 254 other cell types or tissues"/>
</dbReference>
<dbReference type="ExpressionAtlas" id="Q8BIG4">
    <property type="expression patterns" value="baseline and differential"/>
</dbReference>
<dbReference type="GO" id="GO:0000776">
    <property type="term" value="C:kinetochore"/>
    <property type="evidence" value="ECO:0000250"/>
    <property type="project" value="UniProtKB"/>
</dbReference>
<dbReference type="GO" id="GO:0042802">
    <property type="term" value="F:identical protein binding"/>
    <property type="evidence" value="ECO:0007669"/>
    <property type="project" value="Ensembl"/>
</dbReference>
<dbReference type="CDD" id="cd22100">
    <property type="entry name" value="F-box_FBXO28"/>
    <property type="match status" value="1"/>
</dbReference>
<dbReference type="InterPro" id="IPR036047">
    <property type="entry name" value="F-box-like_dom_sf"/>
</dbReference>
<dbReference type="InterPro" id="IPR001810">
    <property type="entry name" value="F-box_dom"/>
</dbReference>
<dbReference type="InterPro" id="IPR039719">
    <property type="entry name" value="FBXO28"/>
</dbReference>
<dbReference type="PANTHER" id="PTHR13252">
    <property type="entry name" value="F-BOX ONLY PROTEIN 28"/>
    <property type="match status" value="1"/>
</dbReference>
<dbReference type="PANTHER" id="PTHR13252:SF9">
    <property type="entry name" value="F-BOX ONLY PROTEIN 28"/>
    <property type="match status" value="1"/>
</dbReference>
<dbReference type="Pfam" id="PF00646">
    <property type="entry name" value="F-box"/>
    <property type="match status" value="1"/>
</dbReference>
<dbReference type="SUPFAM" id="SSF81383">
    <property type="entry name" value="F-box domain"/>
    <property type="match status" value="1"/>
</dbReference>
<dbReference type="PROSITE" id="PS50181">
    <property type="entry name" value="FBOX"/>
    <property type="match status" value="1"/>
</dbReference>
<name>FBX28_MOUSE</name>
<organism>
    <name type="scientific">Mus musculus</name>
    <name type="common">Mouse</name>
    <dbReference type="NCBI Taxonomy" id="10090"/>
    <lineage>
        <taxon>Eukaryota</taxon>
        <taxon>Metazoa</taxon>
        <taxon>Chordata</taxon>
        <taxon>Craniata</taxon>
        <taxon>Vertebrata</taxon>
        <taxon>Euteleostomi</taxon>
        <taxon>Mammalia</taxon>
        <taxon>Eutheria</taxon>
        <taxon>Euarchontoglires</taxon>
        <taxon>Glires</taxon>
        <taxon>Rodentia</taxon>
        <taxon>Myomorpha</taxon>
        <taxon>Muroidea</taxon>
        <taxon>Muridae</taxon>
        <taxon>Murinae</taxon>
        <taxon>Mus</taxon>
        <taxon>Mus</taxon>
    </lineage>
</organism>
<proteinExistence type="evidence at protein level"/>
<sequence>MAAASEERMAEEGGGGHGDGGSCSAAGSAQRQPPAPPSQAPPPGSQAPAAPALAPDHLPQNNTLVALPIVAIENILSFMSYDEISQLRLVCKRMDLVCQRMLNQGFLKVERFHNLCQKQVKAQLPRRESERRNHSLARHADILAAVETRLSLLNMTFMKYVDSNLCCFIPGKVIDEIYRVLRYVNSTRAPQRAHEVLQELRDISSMAMEYFDEKIVPILKRKLPGSDVSGRLMGSPPVPGPSAALTTMQLFSKQNPSRQEVTKLQQQVRTNGAGVTVLRREISELRTKVQEQQKQLQDQDQKLLEQTQIIGEQNARLAELERKLREVMESAVGTSSGSGQSEESPRKRRKATEAIDSLRKSKRLRNRK</sequence>
<feature type="chain" id="PRO_0000307725" description="F-box only protein 28">
    <location>
        <begin position="1"/>
        <end position="368"/>
    </location>
</feature>
<feature type="domain" description="F-box" evidence="3">
    <location>
        <begin position="61"/>
        <end position="109"/>
    </location>
</feature>
<feature type="region of interest" description="Disordered" evidence="4">
    <location>
        <begin position="1"/>
        <end position="56"/>
    </location>
</feature>
<feature type="region of interest" description="Disordered" evidence="4">
    <location>
        <begin position="328"/>
        <end position="368"/>
    </location>
</feature>
<feature type="compositionally biased region" description="Basic and acidic residues" evidence="4">
    <location>
        <begin position="1"/>
        <end position="11"/>
    </location>
</feature>
<feature type="compositionally biased region" description="Gly residues" evidence="4">
    <location>
        <begin position="12"/>
        <end position="21"/>
    </location>
</feature>
<feature type="compositionally biased region" description="Low complexity" evidence="4">
    <location>
        <begin position="22"/>
        <end position="32"/>
    </location>
</feature>
<feature type="compositionally biased region" description="Pro residues" evidence="4">
    <location>
        <begin position="33"/>
        <end position="45"/>
    </location>
</feature>
<feature type="compositionally biased region" description="Low complexity" evidence="4">
    <location>
        <begin position="46"/>
        <end position="55"/>
    </location>
</feature>
<feature type="modified residue" description="Phosphoserine" evidence="2">
    <location>
        <position position="235"/>
    </location>
</feature>
<feature type="modified residue" description="Phosphoserine" evidence="2">
    <location>
        <position position="242"/>
    </location>
</feature>
<feature type="modified residue" description="Phosphothreonine" evidence="2">
    <location>
        <position position="270"/>
    </location>
</feature>
<feature type="modified residue" description="Phosphoserine" evidence="6">
    <location>
        <position position="344"/>
    </location>
</feature>
<feature type="sequence conflict" description="In Ref. 2; BAC36929." evidence="5" ref="2">
    <original>D</original>
    <variation>N</variation>
    <location>
        <position position="356"/>
    </location>
</feature>
<evidence type="ECO:0000250" key="1"/>
<evidence type="ECO:0000250" key="2">
    <source>
        <dbReference type="UniProtKB" id="Q9NVF7"/>
    </source>
</evidence>
<evidence type="ECO:0000255" key="3">
    <source>
        <dbReference type="PROSITE-ProRule" id="PRU00080"/>
    </source>
</evidence>
<evidence type="ECO:0000256" key="4">
    <source>
        <dbReference type="SAM" id="MobiDB-lite"/>
    </source>
</evidence>
<evidence type="ECO:0000305" key="5"/>
<evidence type="ECO:0007744" key="6">
    <source>
    </source>
</evidence>
<gene>
    <name type="primary">Fbxo28</name>
    <name type="synonym">D1Ertd578e</name>
    <name type="synonym">Kiaa0483</name>
</gene>
<protein>
    <recommendedName>
        <fullName>F-box only protein 28</fullName>
    </recommendedName>
</protein>
<accession>Q8BIG4</accession>
<accession>Q3TS97</accession>
<accession>Q7TMH9</accession>
<accession>Q8BIF6</accession>